<feature type="chain" id="PRO_0000431854" description="Protein NETWORKED 2B">
    <location>
        <begin position="1"/>
        <end position="928"/>
    </location>
</feature>
<feature type="domain" description="NAB" evidence="2">
    <location>
        <begin position="10"/>
        <end position="90"/>
    </location>
</feature>
<feature type="region of interest" description="Disordered" evidence="3">
    <location>
        <begin position="108"/>
        <end position="144"/>
    </location>
</feature>
<feature type="region of interest" description="Disordered" evidence="3">
    <location>
        <begin position="447"/>
        <end position="472"/>
    </location>
</feature>
<feature type="region of interest" description="Disordered" evidence="3">
    <location>
        <begin position="489"/>
        <end position="529"/>
    </location>
</feature>
<feature type="region of interest" description="Disordered" evidence="3">
    <location>
        <begin position="620"/>
        <end position="651"/>
    </location>
</feature>
<feature type="coiled-coil region" evidence="1">
    <location>
        <begin position="207"/>
        <end position="309"/>
    </location>
</feature>
<feature type="coiled-coil region" evidence="1">
    <location>
        <begin position="360"/>
        <end position="445"/>
    </location>
</feature>
<feature type="coiled-coil region" evidence="1">
    <location>
        <begin position="547"/>
        <end position="574"/>
    </location>
</feature>
<feature type="compositionally biased region" description="Acidic residues" evidence="3">
    <location>
        <begin position="110"/>
        <end position="119"/>
    </location>
</feature>
<feature type="compositionally biased region" description="Acidic residues" evidence="3">
    <location>
        <begin position="457"/>
        <end position="468"/>
    </location>
</feature>
<feature type="compositionally biased region" description="Basic and acidic residues" evidence="3">
    <location>
        <begin position="489"/>
        <end position="506"/>
    </location>
</feature>
<feature type="compositionally biased region" description="Low complexity" evidence="3">
    <location>
        <begin position="622"/>
        <end position="634"/>
    </location>
</feature>
<feature type="compositionally biased region" description="Basic and acidic residues" evidence="3">
    <location>
        <begin position="642"/>
        <end position="651"/>
    </location>
</feature>
<reference key="1">
    <citation type="journal article" date="2000" name="Nature">
        <title>Sequence and analysis of chromosome 1 of the plant Arabidopsis thaliana.</title>
        <authorList>
            <person name="Theologis A."/>
            <person name="Ecker J.R."/>
            <person name="Palm C.J."/>
            <person name="Federspiel N.A."/>
            <person name="Kaul S."/>
            <person name="White O."/>
            <person name="Alonso J."/>
            <person name="Altafi H."/>
            <person name="Araujo R."/>
            <person name="Bowman C.L."/>
            <person name="Brooks S.Y."/>
            <person name="Buehler E."/>
            <person name="Chan A."/>
            <person name="Chao Q."/>
            <person name="Chen H."/>
            <person name="Cheuk R.F."/>
            <person name="Chin C.W."/>
            <person name="Chung M.K."/>
            <person name="Conn L."/>
            <person name="Conway A.B."/>
            <person name="Conway A.R."/>
            <person name="Creasy T.H."/>
            <person name="Dewar K."/>
            <person name="Dunn P."/>
            <person name="Etgu P."/>
            <person name="Feldblyum T.V."/>
            <person name="Feng J.-D."/>
            <person name="Fong B."/>
            <person name="Fujii C.Y."/>
            <person name="Gill J.E."/>
            <person name="Goldsmith A.D."/>
            <person name="Haas B."/>
            <person name="Hansen N.F."/>
            <person name="Hughes B."/>
            <person name="Huizar L."/>
            <person name="Hunter J.L."/>
            <person name="Jenkins J."/>
            <person name="Johnson-Hopson C."/>
            <person name="Khan S."/>
            <person name="Khaykin E."/>
            <person name="Kim C.J."/>
            <person name="Koo H.L."/>
            <person name="Kremenetskaia I."/>
            <person name="Kurtz D.B."/>
            <person name="Kwan A."/>
            <person name="Lam B."/>
            <person name="Langin-Hooper S."/>
            <person name="Lee A."/>
            <person name="Lee J.M."/>
            <person name="Lenz C.A."/>
            <person name="Li J.H."/>
            <person name="Li Y.-P."/>
            <person name="Lin X."/>
            <person name="Liu S.X."/>
            <person name="Liu Z.A."/>
            <person name="Luros J.S."/>
            <person name="Maiti R."/>
            <person name="Marziali A."/>
            <person name="Militscher J."/>
            <person name="Miranda M."/>
            <person name="Nguyen M."/>
            <person name="Nierman W.C."/>
            <person name="Osborne B.I."/>
            <person name="Pai G."/>
            <person name="Peterson J."/>
            <person name="Pham P.K."/>
            <person name="Rizzo M."/>
            <person name="Rooney T."/>
            <person name="Rowley D."/>
            <person name="Sakano H."/>
            <person name="Salzberg S.L."/>
            <person name="Schwartz J.R."/>
            <person name="Shinn P."/>
            <person name="Southwick A.M."/>
            <person name="Sun H."/>
            <person name="Tallon L.J."/>
            <person name="Tambunga G."/>
            <person name="Toriumi M.J."/>
            <person name="Town C.D."/>
            <person name="Utterback T."/>
            <person name="Van Aken S."/>
            <person name="Vaysberg M."/>
            <person name="Vysotskaia V.S."/>
            <person name="Walker M."/>
            <person name="Wu D."/>
            <person name="Yu G."/>
            <person name="Fraser C.M."/>
            <person name="Venter J.C."/>
            <person name="Davis R.W."/>
        </authorList>
    </citation>
    <scope>NUCLEOTIDE SEQUENCE [LARGE SCALE GENOMIC DNA]</scope>
    <source>
        <strain>cv. Columbia</strain>
    </source>
</reference>
<reference key="2">
    <citation type="journal article" date="2017" name="Plant J.">
        <title>Araport11: a complete reannotation of the Arabidopsis thaliana reference genome.</title>
        <authorList>
            <person name="Cheng C.Y."/>
            <person name="Krishnakumar V."/>
            <person name="Chan A.P."/>
            <person name="Thibaud-Nissen F."/>
            <person name="Schobel S."/>
            <person name="Town C.D."/>
        </authorList>
    </citation>
    <scope>GENOME REANNOTATION</scope>
    <source>
        <strain>cv. Columbia</strain>
    </source>
</reference>
<reference key="3">
    <citation type="journal article" date="2012" name="Curr. Biol.">
        <title>A superfamily of actin-binding proteins at the actin-membrane nexus of higher plants.</title>
        <authorList>
            <person name="Deeks M.J."/>
            <person name="Calcutt J.R."/>
            <person name="Ingle E.K."/>
            <person name="Hawkins T.J."/>
            <person name="Chapman S."/>
            <person name="Richardson A.C."/>
            <person name="Mentlak D.A."/>
            <person name="Dixon M.R."/>
            <person name="Cartwright F."/>
            <person name="Smertenko A.P."/>
            <person name="Oparka K."/>
            <person name="Hussey P.J."/>
        </authorList>
    </citation>
    <scope>GENE FAMILY</scope>
    <scope>NOMENCLATURE</scope>
</reference>
<reference key="4">
    <citation type="journal article" date="2014" name="Front. Plant Sci.">
        <title>The evolution of the actin binding NET superfamily.</title>
        <authorList>
            <person name="Hawkins T.J."/>
            <person name="Deeks M.J."/>
            <person name="Wang P."/>
            <person name="Hussey P.J."/>
        </authorList>
    </citation>
    <scope>GENE FAMILY</scope>
</reference>
<dbReference type="EMBL" id="AC000132">
    <property type="protein sequence ID" value="AAB60728.1"/>
    <property type="status" value="ALT_SEQ"/>
    <property type="molecule type" value="Genomic_DNA"/>
</dbReference>
<dbReference type="EMBL" id="CP002684">
    <property type="protein sequence ID" value="AEE28484.1"/>
    <property type="molecule type" value="Genomic_DNA"/>
</dbReference>
<dbReference type="PIR" id="B86231">
    <property type="entry name" value="B86231"/>
</dbReference>
<dbReference type="RefSeq" id="NP_172443.2">
    <property type="nucleotide sequence ID" value="NM_100844.2"/>
</dbReference>
<dbReference type="SMR" id="F4I131"/>
<dbReference type="STRING" id="3702.F4I131"/>
<dbReference type="iPTMnet" id="F4I131"/>
<dbReference type="PaxDb" id="3702-AT1G09720.1"/>
<dbReference type="EnsemblPlants" id="AT1G09720.1">
    <property type="protein sequence ID" value="AT1G09720.1"/>
    <property type="gene ID" value="AT1G09720"/>
</dbReference>
<dbReference type="GeneID" id="837500"/>
<dbReference type="Gramene" id="AT1G09720.1">
    <property type="protein sequence ID" value="AT1G09720.1"/>
    <property type="gene ID" value="AT1G09720"/>
</dbReference>
<dbReference type="KEGG" id="ath:AT1G09720"/>
<dbReference type="Araport" id="AT1G09720"/>
<dbReference type="TAIR" id="AT1G09720">
    <property type="gene designation" value="NET2B"/>
</dbReference>
<dbReference type="eggNOG" id="ENOG502QQVH">
    <property type="taxonomic scope" value="Eukaryota"/>
</dbReference>
<dbReference type="HOGENOM" id="CLU_004324_0_0_1"/>
<dbReference type="InParanoid" id="F4I131"/>
<dbReference type="OMA" id="VHEINGL"/>
<dbReference type="PRO" id="PR:F4I131"/>
<dbReference type="Proteomes" id="UP000006548">
    <property type="component" value="Chromosome 1"/>
</dbReference>
<dbReference type="ExpressionAtlas" id="F4I131">
    <property type="expression patterns" value="baseline and differential"/>
</dbReference>
<dbReference type="GO" id="GO:0016020">
    <property type="term" value="C:membrane"/>
    <property type="evidence" value="ECO:0007669"/>
    <property type="project" value="UniProtKB-ARBA"/>
</dbReference>
<dbReference type="GO" id="GO:0003779">
    <property type="term" value="F:actin binding"/>
    <property type="evidence" value="ECO:0007669"/>
    <property type="project" value="InterPro"/>
</dbReference>
<dbReference type="InterPro" id="IPR011684">
    <property type="entry name" value="NAB"/>
</dbReference>
<dbReference type="InterPro" id="IPR056889">
    <property type="entry name" value="NET2A-D/KIP1-like_C"/>
</dbReference>
<dbReference type="InterPro" id="IPR056888">
    <property type="entry name" value="NET2A-D/KIP1-like_dom"/>
</dbReference>
<dbReference type="PANTHER" id="PTHR31631:SF3">
    <property type="entry name" value="PROTEIN NETWORKED 2B"/>
    <property type="match status" value="1"/>
</dbReference>
<dbReference type="PANTHER" id="PTHR31631">
    <property type="entry name" value="PROTEIN NETWORKED 2D"/>
    <property type="match status" value="1"/>
</dbReference>
<dbReference type="Pfam" id="PF07765">
    <property type="entry name" value="KIP1"/>
    <property type="match status" value="1"/>
</dbReference>
<dbReference type="Pfam" id="PF25014">
    <property type="entry name" value="NET2A"/>
    <property type="match status" value="2"/>
</dbReference>
<dbReference type="Pfam" id="PF24918">
    <property type="entry name" value="NET2A_C"/>
    <property type="match status" value="1"/>
</dbReference>
<dbReference type="PROSITE" id="PS51774">
    <property type="entry name" value="NAB"/>
    <property type="match status" value="1"/>
</dbReference>
<sequence>MLQRAASNAYSWWWASHIRTKQSKWLEHNLQDMEEKVKYTLKIIDGDGDSFAKRAEMYYRKRPEIVNFVEEAFRSYRALAERYDHLSTELQSANHMIATAFPEHVPFPLVDDDDDDDDDNPKKPPKHLHLIPSGTNIPQVPEVPKKEFKSQSLMVLSRKEPGVLQSSETSSALVSSGLSREEALEEIDKIHKGILVLQTEKEFVRSSYEQSYDRYWNLENEVEEMQKRVCSLQDEFGVGGEIEDGEARTLVATAALSSCKETIAKLEETQKRFSEDAGIEKERIDTATERCEALKKKFEIKVEEQAKKAFHGQESSYESVKESRQIDLNENLSNVDFAEKIDELVEKVVSLETTALSHTALLKTLRSETNELQDHIRDVEKDKACLVSDSMDMKKRITVLEDELRKVKNLFQRVEDQNKNLHKHLTEANSTAKDLSGKLQEVKMDEDVEGDGLNPEDIQEEDTVEDSDSISNEREIKNAEEIKEAMVIKQSRDQESMQEEKSETRDSCGGLSETESTCFGTEAEDEERRNWRQLLPADGMEDREKVLLDEYSSVLRDYREVKRKLSEVEKKNRDGFFELALQLRELKNAVSCEDVDFHFLHQKPELPGQGFPHPVERNRAESVSISHSSNSSFSMPPLPQRGDLKRASEQEKEDGFKVKFAGISDSLRKKIPTVEEKVRGDIDAVLEENIEFWLRFSTSVHQIQKYHTSVQDLKAELSKIESKQQGNAGSSSNTALASEAKPIYRHLREIRTELQLWLENSAILRDELEGRYATLCNIKDEVSRVTSQSGATEVSNTEIRGYQAAKFHGEILNMKQENKRVFNELQAGLDRARALRAEVERVVCKLEENLGILDGTATRSLSKRMPSSAGKPRIPLRSFLFGVKLKKYKQQPKQTSTIFSCVSPSPALNKQCSYIIPPAKLPEYVKRS</sequence>
<gene>
    <name evidence="4" type="primary">NET2B</name>
    <name evidence="7" type="ordered locus">At1g09720</name>
    <name evidence="8" type="ORF">F21M12.11</name>
</gene>
<protein>
    <recommendedName>
        <fullName evidence="4">Protein NETWORKED 2B</fullName>
    </recommendedName>
</protein>
<keyword id="KW-0175">Coiled coil</keyword>
<keyword id="KW-1185">Reference proteome</keyword>
<proteinExistence type="inferred from homology"/>
<name>NET2B_ARATH</name>
<evidence type="ECO:0000255" key="1"/>
<evidence type="ECO:0000255" key="2">
    <source>
        <dbReference type="PROSITE-ProRule" id="PRU01110"/>
    </source>
</evidence>
<evidence type="ECO:0000256" key="3">
    <source>
        <dbReference type="SAM" id="MobiDB-lite"/>
    </source>
</evidence>
<evidence type="ECO:0000303" key="4">
    <source>
    </source>
</evidence>
<evidence type="ECO:0000305" key="5"/>
<evidence type="ECO:0000305" key="6">
    <source>
    </source>
</evidence>
<evidence type="ECO:0000312" key="7">
    <source>
        <dbReference type="Araport" id="AT1G09720"/>
    </source>
</evidence>
<evidence type="ECO:0000312" key="8">
    <source>
        <dbReference type="EMBL" id="AAB60728.1"/>
    </source>
</evidence>
<evidence type="ECO:0000312" key="9">
    <source>
        <dbReference type="Proteomes" id="UP000006548"/>
    </source>
</evidence>
<comment type="function">
    <text evidence="6">Plant-specific actin binding protein. May be part of a membrane-cytoskeletal adapter complex.</text>
</comment>
<comment type="similarity">
    <text evidence="5">Belongs to the NET family.</text>
</comment>
<comment type="sequence caution" evidence="5">
    <conflict type="erroneous gene model prediction">
        <sequence resource="EMBL-CDS" id="AAB60728"/>
    </conflict>
</comment>
<organism evidence="9">
    <name type="scientific">Arabidopsis thaliana</name>
    <name type="common">Mouse-ear cress</name>
    <dbReference type="NCBI Taxonomy" id="3702"/>
    <lineage>
        <taxon>Eukaryota</taxon>
        <taxon>Viridiplantae</taxon>
        <taxon>Streptophyta</taxon>
        <taxon>Embryophyta</taxon>
        <taxon>Tracheophyta</taxon>
        <taxon>Spermatophyta</taxon>
        <taxon>Magnoliopsida</taxon>
        <taxon>eudicotyledons</taxon>
        <taxon>Gunneridae</taxon>
        <taxon>Pentapetalae</taxon>
        <taxon>rosids</taxon>
        <taxon>malvids</taxon>
        <taxon>Brassicales</taxon>
        <taxon>Brassicaceae</taxon>
        <taxon>Camelineae</taxon>
        <taxon>Arabidopsis</taxon>
    </lineage>
</organism>
<accession>F4I131</accession>
<accession>O04494</accession>